<evidence type="ECO:0000255" key="1">
    <source>
        <dbReference type="HAMAP-Rule" id="MF_03018"/>
    </source>
</evidence>
<evidence type="ECO:0000305" key="2"/>
<comment type="function">
    <text evidence="1">Catalyzes the hydroxylation of L-kynurenine (L-Kyn) to form 3-hydroxy-L-kynurenine (L-3OHKyn). Required for synthesis of quinolinic acid.</text>
</comment>
<comment type="catalytic activity">
    <reaction evidence="1">
        <text>L-kynurenine + NADPH + O2 + H(+) = 3-hydroxy-L-kynurenine + NADP(+) + H2O</text>
        <dbReference type="Rhea" id="RHEA:20545"/>
        <dbReference type="ChEBI" id="CHEBI:15377"/>
        <dbReference type="ChEBI" id="CHEBI:15378"/>
        <dbReference type="ChEBI" id="CHEBI:15379"/>
        <dbReference type="ChEBI" id="CHEBI:57783"/>
        <dbReference type="ChEBI" id="CHEBI:57959"/>
        <dbReference type="ChEBI" id="CHEBI:58125"/>
        <dbReference type="ChEBI" id="CHEBI:58349"/>
        <dbReference type="EC" id="1.14.13.9"/>
    </reaction>
</comment>
<comment type="cofactor">
    <cofactor evidence="1">
        <name>FAD</name>
        <dbReference type="ChEBI" id="CHEBI:57692"/>
    </cofactor>
</comment>
<comment type="pathway">
    <text evidence="1">Cofactor biosynthesis; NAD(+) biosynthesis; quinolinate from L-kynurenine: step 1/3.</text>
</comment>
<comment type="subcellular location">
    <subcellularLocation>
        <location evidence="1">Mitochondrion</location>
    </subcellularLocation>
    <subcellularLocation>
        <location evidence="1">Membrane</location>
        <topology evidence="1">Multi-pass membrane protein</topology>
    </subcellularLocation>
</comment>
<comment type="similarity">
    <text evidence="1">Belongs to the aromatic-ring hydroxylase family. KMO subfamily.</text>
</comment>
<comment type="sequence caution" evidence="2">
    <conflict type="erroneous gene model prediction">
        <sequence resource="EMBL-CDS" id="EDW74042"/>
    </conflict>
    <text>The predicted gene GK21583 has been split into 2 genes: GK21583 and GK27737.</text>
</comment>
<dbReference type="EC" id="1.14.13.9" evidence="1"/>
<dbReference type="EMBL" id="CH963849">
    <property type="protein sequence ID" value="EDW74042.1"/>
    <property type="status" value="ALT_SEQ"/>
    <property type="molecule type" value="Genomic_DNA"/>
</dbReference>
<dbReference type="SMR" id="P0CU30"/>
<dbReference type="STRING" id="7260.P0CU30"/>
<dbReference type="EnsemblMetazoa" id="FBtr0416149">
    <property type="protein sequence ID" value="FBpp0374346"/>
    <property type="gene ID" value="FBgn0223575"/>
</dbReference>
<dbReference type="EnsemblMetazoa" id="XM_015178740.3">
    <property type="protein sequence ID" value="XP_015034226.1"/>
    <property type="gene ID" value="LOC6639967"/>
</dbReference>
<dbReference type="GeneID" id="6639967"/>
<dbReference type="KEGG" id="dwi:6639967"/>
<dbReference type="CTD" id="35724"/>
<dbReference type="OrthoDB" id="10053569at2759"/>
<dbReference type="UniPathway" id="UPA00253">
    <property type="reaction ID" value="UER00328"/>
</dbReference>
<dbReference type="Proteomes" id="UP000007798">
    <property type="component" value="Unassembled WGS sequence"/>
</dbReference>
<dbReference type="GO" id="GO:0005741">
    <property type="term" value="C:mitochondrial outer membrane"/>
    <property type="evidence" value="ECO:0007669"/>
    <property type="project" value="TreeGrafter"/>
</dbReference>
<dbReference type="GO" id="GO:0071949">
    <property type="term" value="F:FAD binding"/>
    <property type="evidence" value="ECO:0007669"/>
    <property type="project" value="InterPro"/>
</dbReference>
<dbReference type="GO" id="GO:0004502">
    <property type="term" value="F:kynurenine 3-monooxygenase activity"/>
    <property type="evidence" value="ECO:0007669"/>
    <property type="project" value="UniProtKB-UniRule"/>
</dbReference>
<dbReference type="GO" id="GO:0034354">
    <property type="term" value="P:'de novo' NAD biosynthetic process from L-tryptophan"/>
    <property type="evidence" value="ECO:0007669"/>
    <property type="project" value="UniProtKB-UniRule"/>
</dbReference>
<dbReference type="GO" id="GO:0043420">
    <property type="term" value="P:anthranilate metabolic process"/>
    <property type="evidence" value="ECO:0007669"/>
    <property type="project" value="UniProtKB-UniRule"/>
</dbReference>
<dbReference type="GO" id="GO:0070189">
    <property type="term" value="P:kynurenine metabolic process"/>
    <property type="evidence" value="ECO:0007669"/>
    <property type="project" value="TreeGrafter"/>
</dbReference>
<dbReference type="GO" id="GO:0006569">
    <property type="term" value="P:L-tryptophan catabolic process"/>
    <property type="evidence" value="ECO:0007669"/>
    <property type="project" value="UniProtKB-UniRule"/>
</dbReference>
<dbReference type="GO" id="GO:0019805">
    <property type="term" value="P:quinolinate biosynthetic process"/>
    <property type="evidence" value="ECO:0007669"/>
    <property type="project" value="UniProtKB-UniRule"/>
</dbReference>
<dbReference type="FunFam" id="3.50.50.60:FF:000129">
    <property type="entry name" value="Kynurenine 3-monooxygenase"/>
    <property type="match status" value="1"/>
</dbReference>
<dbReference type="Gene3D" id="3.50.50.60">
    <property type="entry name" value="FAD/NAD(P)-binding domain"/>
    <property type="match status" value="1"/>
</dbReference>
<dbReference type="HAMAP" id="MF_01971">
    <property type="entry name" value="Kynurenine_monooxygenase"/>
    <property type="match status" value="1"/>
</dbReference>
<dbReference type="InterPro" id="IPR002938">
    <property type="entry name" value="FAD-bd"/>
</dbReference>
<dbReference type="InterPro" id="IPR036188">
    <property type="entry name" value="FAD/NAD-bd_sf"/>
</dbReference>
<dbReference type="InterPro" id="IPR027545">
    <property type="entry name" value="Kynurenine_monooxygenase"/>
</dbReference>
<dbReference type="PANTHER" id="PTHR46028">
    <property type="entry name" value="KYNURENINE 3-MONOOXYGENASE"/>
    <property type="match status" value="1"/>
</dbReference>
<dbReference type="PANTHER" id="PTHR46028:SF2">
    <property type="entry name" value="KYNURENINE 3-MONOOXYGENASE"/>
    <property type="match status" value="1"/>
</dbReference>
<dbReference type="Pfam" id="PF01494">
    <property type="entry name" value="FAD_binding_3"/>
    <property type="match status" value="1"/>
</dbReference>
<dbReference type="PRINTS" id="PR00420">
    <property type="entry name" value="RNGMNOXGNASE"/>
</dbReference>
<dbReference type="SUPFAM" id="SSF51905">
    <property type="entry name" value="FAD/NAD(P)-binding domain"/>
    <property type="match status" value="1"/>
</dbReference>
<name>KMO_DROWI</name>
<keyword id="KW-0274">FAD</keyword>
<keyword id="KW-0285">Flavoprotein</keyword>
<keyword id="KW-0472">Membrane</keyword>
<keyword id="KW-0496">Mitochondrion</keyword>
<keyword id="KW-0503">Monooxygenase</keyword>
<keyword id="KW-0521">NADP</keyword>
<keyword id="KW-0560">Oxidoreductase</keyword>
<keyword id="KW-0662">Pyridine nucleotide biosynthesis</keyword>
<keyword id="KW-1185">Reference proteome</keyword>
<keyword id="KW-0812">Transmembrane</keyword>
<keyword id="KW-1133">Transmembrane helix</keyword>
<reference key="1">
    <citation type="journal article" date="2007" name="Nature">
        <title>Evolution of genes and genomes on the Drosophila phylogeny.</title>
        <authorList>
            <consortium name="Drosophila 12 genomes consortium"/>
        </authorList>
    </citation>
    <scope>NUCLEOTIDE SEQUENCE [LARGE SCALE GENOMIC DNA]</scope>
    <source>
        <strain>Tucson 14030-0811.24</strain>
    </source>
</reference>
<gene>
    <name evidence="1" type="primary">cn</name>
    <name type="ORF">GK21583</name>
</gene>
<proteinExistence type="inferred from homology"/>
<feature type="chain" id="PRO_0000437790" description="Kynurenine 3-monooxygenase">
    <location>
        <begin position="1"/>
        <end position="455"/>
    </location>
</feature>
<feature type="transmembrane region" description="Helical" evidence="1">
    <location>
        <begin position="393"/>
        <end position="416"/>
    </location>
</feature>
<feature type="transmembrane region" description="Helical" evidence="1">
    <location>
        <begin position="429"/>
        <end position="453"/>
    </location>
</feature>
<organism>
    <name type="scientific">Drosophila willistoni</name>
    <name type="common">Fruit fly</name>
    <dbReference type="NCBI Taxonomy" id="7260"/>
    <lineage>
        <taxon>Eukaryota</taxon>
        <taxon>Metazoa</taxon>
        <taxon>Ecdysozoa</taxon>
        <taxon>Arthropoda</taxon>
        <taxon>Hexapoda</taxon>
        <taxon>Insecta</taxon>
        <taxon>Pterygota</taxon>
        <taxon>Neoptera</taxon>
        <taxon>Endopterygota</taxon>
        <taxon>Diptera</taxon>
        <taxon>Brachycera</taxon>
        <taxon>Muscomorpha</taxon>
        <taxon>Ephydroidea</taxon>
        <taxon>Drosophilidae</taxon>
        <taxon>Drosophila</taxon>
        <taxon>Sophophora</taxon>
    </lineage>
</organism>
<protein>
    <recommendedName>
        <fullName evidence="1">Kynurenine 3-monooxygenase</fullName>
        <ecNumber evidence="1">1.14.13.9</ecNumber>
    </recommendedName>
    <alternativeName>
        <fullName evidence="1">Kynurenine 3-hydroxylase</fullName>
    </alternativeName>
</protein>
<sequence>MSVILTETNGSDERRKVAIVGAGLVGSLAALYFARMGNQVDLYEYRDDVRKSELVQGRSINLALSQRGRKALSQLGLGLEEQVLSTAIPMKGRMLHNIQGKTSVVIYDPCFKQCLYSVGRKQLNELLLNACDKFPNIKCHFDHKLTKANVKEGQLEFKRSHSVEGVKAKADLIVGCDGAFSALRQNLIKLPGFNYTQEYIETGYLELCIPAKKNEFQMPPNYLHIWPRDNFMMIALPNQDKSFTVTLSMPFDIFASIKNPEELIQFFTQYYPDALPLIGKEQLIKDFFKTKPQHLLSIKCRPYHYENKALLLGDAAHAMVPYYGQGMNAGMEDVTLLNSLLQQLPLEEALAQYTEQRWQDAFAICDLAMYNYVEMRDLTKRWSFRCRKMLDTWLFRLFPTIWVPLYNSVSFTSMPYSKCIANRKWQDQLLWRTFLGFIVVGLGVTGSAIYWQRFR</sequence>
<accession>P0CU30</accession>
<accession>B4MPK3</accession>